<keyword id="KW-0255">Endonuclease</keyword>
<keyword id="KW-0378">Hydrolase</keyword>
<keyword id="KW-0540">Nuclease</keyword>
<keyword id="KW-0819">tRNA processing</keyword>
<name>RFRNP_THEON</name>
<sequence>MRFVLDTSIFVNPEIRRKFGDNPTEAMRTFLGYAEMLFGRVEFYMPPGIYREVMHFVDEDELLPEIELYIIKKPPNVHDIKIPAFVVYELIDDIRRRIDKGLRVAEKAVRESVIETDNVDRIIQKLRRNYRKALREGIVDSKEDFELILLAKELDATIVSADVGILTWAQKMGIKWIDAANFREVLEGLVAKMGEGKNL</sequence>
<accession>B6YSW7</accession>
<evidence type="ECO:0000255" key="1">
    <source>
        <dbReference type="HAMAP-Rule" id="MF_01078"/>
    </source>
</evidence>
<feature type="chain" id="PRO_0000366698" description="RNA-free ribonuclease P">
    <location>
        <begin position="1"/>
        <end position="199"/>
    </location>
</feature>
<comment type="function">
    <text evidence="1">RNA-free RNase P that catalyzes the removal of the 5'-leader sequence from pre-tRNA to produce the mature 5'-terminus.</text>
</comment>
<comment type="catalytic activity">
    <reaction evidence="1">
        <text>Endonucleolytic cleavage of RNA, removing 5'-extranucleotides from tRNA precursor.</text>
        <dbReference type="EC" id="3.1.26.5"/>
    </reaction>
</comment>
<comment type="similarity">
    <text evidence="1">Belongs to the HARP family.</text>
</comment>
<dbReference type="EC" id="3.1.26.5" evidence="1"/>
<dbReference type="EMBL" id="CP000855">
    <property type="protein sequence ID" value="ACJ15654.1"/>
    <property type="molecule type" value="Genomic_DNA"/>
</dbReference>
<dbReference type="RefSeq" id="WP_012571127.1">
    <property type="nucleotide sequence ID" value="NC_011529.1"/>
</dbReference>
<dbReference type="SMR" id="B6YSW7"/>
<dbReference type="STRING" id="523850.TON_0169"/>
<dbReference type="GeneID" id="7017825"/>
<dbReference type="KEGG" id="ton:TON_0169"/>
<dbReference type="PATRIC" id="fig|523850.10.peg.169"/>
<dbReference type="eggNOG" id="arCOG00720">
    <property type="taxonomic scope" value="Archaea"/>
</dbReference>
<dbReference type="HOGENOM" id="CLU_109672_0_0_2"/>
<dbReference type="OrthoDB" id="95197at2157"/>
<dbReference type="Proteomes" id="UP000002727">
    <property type="component" value="Chromosome"/>
</dbReference>
<dbReference type="GO" id="GO:0004526">
    <property type="term" value="F:ribonuclease P activity"/>
    <property type="evidence" value="ECO:0007669"/>
    <property type="project" value="UniProtKB-UniRule"/>
</dbReference>
<dbReference type="GO" id="GO:0001682">
    <property type="term" value="P:tRNA 5'-leader removal"/>
    <property type="evidence" value="ECO:0007669"/>
    <property type="project" value="UniProtKB-UniRule"/>
</dbReference>
<dbReference type="CDD" id="cd18691">
    <property type="entry name" value="PIN_VapC-like"/>
    <property type="match status" value="1"/>
</dbReference>
<dbReference type="HAMAP" id="MF_01078">
    <property type="entry name" value="RNA_free_RNase_P"/>
    <property type="match status" value="1"/>
</dbReference>
<dbReference type="InterPro" id="IPR029060">
    <property type="entry name" value="PIN-like_dom_sf"/>
</dbReference>
<dbReference type="InterPro" id="IPR014856">
    <property type="entry name" value="RNA_free_RNase_P"/>
</dbReference>
<dbReference type="NCBIfam" id="NF003342">
    <property type="entry name" value="PRK04358.1-3"/>
    <property type="match status" value="1"/>
</dbReference>
<dbReference type="NCBIfam" id="TIGR03875">
    <property type="entry name" value="RNA_lig_partner"/>
    <property type="match status" value="1"/>
</dbReference>
<dbReference type="PANTHER" id="PTHR41173:SF1">
    <property type="entry name" value="RNA-FREE RIBONUCLEASE P"/>
    <property type="match status" value="1"/>
</dbReference>
<dbReference type="PANTHER" id="PTHR41173">
    <property type="entry name" value="UPF0278 PROTEIN TK1425"/>
    <property type="match status" value="1"/>
</dbReference>
<dbReference type="Pfam" id="PF08745">
    <property type="entry name" value="PIN_5"/>
    <property type="match status" value="1"/>
</dbReference>
<dbReference type="SUPFAM" id="SSF88723">
    <property type="entry name" value="PIN domain-like"/>
    <property type="match status" value="1"/>
</dbReference>
<reference key="1">
    <citation type="journal article" date="2008" name="J. Bacteriol.">
        <title>The complete genome sequence of Thermococcus onnurineus NA1 reveals a mixed heterotrophic and carboxydotrophic metabolism.</title>
        <authorList>
            <person name="Lee H.S."/>
            <person name="Kang S.G."/>
            <person name="Bae S.S."/>
            <person name="Lim J.K."/>
            <person name="Cho Y."/>
            <person name="Kim Y.J."/>
            <person name="Jeon J.H."/>
            <person name="Cha S.-S."/>
            <person name="Kwon K.K."/>
            <person name="Kim H.-T."/>
            <person name="Park C.-J."/>
            <person name="Lee H.-W."/>
            <person name="Kim S.I."/>
            <person name="Chun J."/>
            <person name="Colwell R.R."/>
            <person name="Kim S.-J."/>
            <person name="Lee J.-H."/>
        </authorList>
    </citation>
    <scope>NUCLEOTIDE SEQUENCE [LARGE SCALE GENOMIC DNA]</scope>
    <source>
        <strain>NA1</strain>
    </source>
</reference>
<gene>
    <name type="ordered locus">TON_0169</name>
</gene>
<protein>
    <recommendedName>
        <fullName evidence="1">RNA-free ribonuclease P</fullName>
        <shortName evidence="1">RNA-free RNase P</shortName>
        <ecNumber evidence="1">3.1.26.5</ecNumber>
    </recommendedName>
    <alternativeName>
        <fullName evidence="1">Protein-only RNase P</fullName>
    </alternativeName>
</protein>
<proteinExistence type="inferred from homology"/>
<organism>
    <name type="scientific">Thermococcus onnurineus (strain NA1)</name>
    <dbReference type="NCBI Taxonomy" id="523850"/>
    <lineage>
        <taxon>Archaea</taxon>
        <taxon>Methanobacteriati</taxon>
        <taxon>Methanobacteriota</taxon>
        <taxon>Thermococci</taxon>
        <taxon>Thermococcales</taxon>
        <taxon>Thermococcaceae</taxon>
        <taxon>Thermococcus</taxon>
    </lineage>
</organism>